<sequence>MNKVLSCRSLGKRYQEGKLALDVLSGVDLEVGKGEHLAIVGASGSGKSTLLHLLGGLDTPTAGTVEVLGRDLSKLSETERGKLRNESMGFVYQFHHLLPEFTALENVMMPLLIRRMDKGEAARRAAEMLERVGLGKRLEHKPGELSGGERQRAAIARALVTQPACLLADEPTGNLDAHTASQVFELMLELNRTLGTSLIIVTHDLELAGRTQRVLRLNEGRLAVSDTVSA</sequence>
<evidence type="ECO:0000255" key="1">
    <source>
        <dbReference type="HAMAP-Rule" id="MF_01708"/>
    </source>
</evidence>
<feature type="chain" id="PRO_0000092432" description="Lipoprotein-releasing system ATP-binding protein LolD">
    <location>
        <begin position="1"/>
        <end position="230"/>
    </location>
</feature>
<feature type="domain" description="ABC transporter" evidence="1">
    <location>
        <begin position="5"/>
        <end position="230"/>
    </location>
</feature>
<feature type="binding site" evidence="1">
    <location>
        <begin position="41"/>
        <end position="48"/>
    </location>
    <ligand>
        <name>ATP</name>
        <dbReference type="ChEBI" id="CHEBI:30616"/>
    </ligand>
</feature>
<comment type="function">
    <text evidence="1">Part of the ABC transporter complex LolCDE involved in the translocation of mature outer membrane-directed lipoproteins, from the inner membrane to the periplasmic chaperone, LolA. Responsible for the formation of the LolA-lipoprotein complex in an ATP-dependent manner.</text>
</comment>
<comment type="subunit">
    <text evidence="1">The complex is composed of two ATP-binding proteins (LolD) and two transmembrane proteins (LolC and LolE).</text>
</comment>
<comment type="subcellular location">
    <subcellularLocation>
        <location evidence="1">Cell inner membrane</location>
        <topology evidence="1">Peripheral membrane protein</topology>
    </subcellularLocation>
</comment>
<comment type="similarity">
    <text evidence="1">Belongs to the ABC transporter superfamily. Lipoprotein translocase (TC 3.A.1.125) family.</text>
</comment>
<reference key="1">
    <citation type="journal article" date="2003" name="Proc. Natl. Acad. Sci. U.S.A.">
        <title>The complete genome sequence of Chromobacterium violaceum reveals remarkable and exploitable bacterial adaptability.</title>
        <authorList>
            <person name="Vasconcelos A.T.R."/>
            <person name="de Almeida D.F."/>
            <person name="Hungria M."/>
            <person name="Guimaraes C.T."/>
            <person name="Antonio R.V."/>
            <person name="Almeida F.C."/>
            <person name="de Almeida L.G.P."/>
            <person name="de Almeida R."/>
            <person name="Alves-Gomes J.A."/>
            <person name="Andrade E.M."/>
            <person name="Araripe J."/>
            <person name="de Araujo M.F.F."/>
            <person name="Astolfi-Filho S."/>
            <person name="Azevedo V."/>
            <person name="Baptista A.J."/>
            <person name="Bataus L.A.M."/>
            <person name="Batista J.S."/>
            <person name="Belo A."/>
            <person name="van den Berg C."/>
            <person name="Bogo M."/>
            <person name="Bonatto S."/>
            <person name="Bordignon J."/>
            <person name="Brigido M.M."/>
            <person name="Brito C.A."/>
            <person name="Brocchi M."/>
            <person name="Burity H.A."/>
            <person name="Camargo A.A."/>
            <person name="Cardoso D.D.P."/>
            <person name="Carneiro N.P."/>
            <person name="Carraro D.M."/>
            <person name="Carvalho C.M.B."/>
            <person name="Cascardo J.C.M."/>
            <person name="Cavada B.S."/>
            <person name="Chueire L.M.O."/>
            <person name="Creczynski-Pasa T.B."/>
            <person name="Cunha-Junior N.C."/>
            <person name="Fagundes N."/>
            <person name="Falcao C.L."/>
            <person name="Fantinatti F."/>
            <person name="Farias I.P."/>
            <person name="Felipe M.S.S."/>
            <person name="Ferrari L.P."/>
            <person name="Ferro J.A."/>
            <person name="Ferro M.I.T."/>
            <person name="Franco G.R."/>
            <person name="Freitas N.S.A."/>
            <person name="Furlan L.R."/>
            <person name="Gazzinelli R.T."/>
            <person name="Gomes E.A."/>
            <person name="Goncalves P.R."/>
            <person name="Grangeiro T.B."/>
            <person name="Grattapaglia D."/>
            <person name="Grisard E.C."/>
            <person name="Hanna E.S."/>
            <person name="Jardim S.N."/>
            <person name="Laurino J."/>
            <person name="Leoi L.C.T."/>
            <person name="Lima L.F.A."/>
            <person name="Loureiro M.F."/>
            <person name="Lyra M.C.C.P."/>
            <person name="Madeira H.M.F."/>
            <person name="Manfio G.P."/>
            <person name="Maranhao A.Q."/>
            <person name="Martins W.S."/>
            <person name="di Mauro S.M.Z."/>
            <person name="de Medeiros S.R.B."/>
            <person name="Meissner R.V."/>
            <person name="Moreira M.A.M."/>
            <person name="Nascimento F.F."/>
            <person name="Nicolas M.F."/>
            <person name="Oliveira J.G."/>
            <person name="Oliveira S.C."/>
            <person name="Paixao R.F.C."/>
            <person name="Parente J.A."/>
            <person name="Pedrosa F.O."/>
            <person name="Pena S.D.J."/>
            <person name="Pereira J.O."/>
            <person name="Pereira M."/>
            <person name="Pinto L.S.R.C."/>
            <person name="Pinto L.S."/>
            <person name="Porto J.I.R."/>
            <person name="Potrich D.P."/>
            <person name="Ramalho-Neto C.E."/>
            <person name="Reis A.M.M."/>
            <person name="Rigo L.U."/>
            <person name="Rondinelli E."/>
            <person name="Santos E.B.P."/>
            <person name="Santos F.R."/>
            <person name="Schneider M.P.C."/>
            <person name="Seuanez H.N."/>
            <person name="Silva A.M.R."/>
            <person name="da Silva A.L.C."/>
            <person name="Silva D.W."/>
            <person name="Silva R."/>
            <person name="Simoes I.C."/>
            <person name="Simon D."/>
            <person name="Soares C.M.A."/>
            <person name="Soares R.B.A."/>
            <person name="Souza E.M."/>
            <person name="Souza K.R.L."/>
            <person name="Souza R.C."/>
            <person name="Steffens M.B.R."/>
            <person name="Steindel M."/>
            <person name="Teixeira S.R."/>
            <person name="Urmenyi T."/>
            <person name="Vettore A."/>
            <person name="Wassem R."/>
            <person name="Zaha A."/>
            <person name="Simpson A.J.G."/>
        </authorList>
    </citation>
    <scope>NUCLEOTIDE SEQUENCE [LARGE SCALE GENOMIC DNA]</scope>
    <source>
        <strain>ATCC 12472 / DSM 30191 / JCM 1249 / CCUG 213 / NBRC 12614 / NCIMB 9131 / NCTC 9757 / MK</strain>
    </source>
</reference>
<accession>Q7NTU0</accession>
<keyword id="KW-0067">ATP-binding</keyword>
<keyword id="KW-0997">Cell inner membrane</keyword>
<keyword id="KW-1003">Cell membrane</keyword>
<keyword id="KW-0472">Membrane</keyword>
<keyword id="KW-0547">Nucleotide-binding</keyword>
<keyword id="KW-1185">Reference proteome</keyword>
<keyword id="KW-1278">Translocase</keyword>
<keyword id="KW-0813">Transport</keyword>
<name>LOLD_CHRVO</name>
<organism>
    <name type="scientific">Chromobacterium violaceum (strain ATCC 12472 / DSM 30191 / JCM 1249 / CCUG 213 / NBRC 12614 / NCIMB 9131 / NCTC 9757 / MK)</name>
    <dbReference type="NCBI Taxonomy" id="243365"/>
    <lineage>
        <taxon>Bacteria</taxon>
        <taxon>Pseudomonadati</taxon>
        <taxon>Pseudomonadota</taxon>
        <taxon>Betaproteobacteria</taxon>
        <taxon>Neisseriales</taxon>
        <taxon>Chromobacteriaceae</taxon>
        <taxon>Chromobacterium</taxon>
    </lineage>
</organism>
<proteinExistence type="inferred from homology"/>
<gene>
    <name evidence="1" type="primary">lolD</name>
    <name type="ordered locus">CV_2963</name>
</gene>
<dbReference type="EC" id="7.6.2.-" evidence="1"/>
<dbReference type="EMBL" id="AE016825">
    <property type="protein sequence ID" value="AAQ60631.1"/>
    <property type="molecule type" value="Genomic_DNA"/>
</dbReference>
<dbReference type="RefSeq" id="WP_011136510.1">
    <property type="nucleotide sequence ID" value="NC_005085.1"/>
</dbReference>
<dbReference type="SMR" id="Q7NTU0"/>
<dbReference type="STRING" id="243365.CV_2963"/>
<dbReference type="GeneID" id="66368663"/>
<dbReference type="KEGG" id="cvi:CV_2963"/>
<dbReference type="eggNOG" id="COG1136">
    <property type="taxonomic scope" value="Bacteria"/>
</dbReference>
<dbReference type="HOGENOM" id="CLU_000604_1_22_4"/>
<dbReference type="OrthoDB" id="581709at2"/>
<dbReference type="Proteomes" id="UP000001424">
    <property type="component" value="Chromosome"/>
</dbReference>
<dbReference type="GO" id="GO:0005886">
    <property type="term" value="C:plasma membrane"/>
    <property type="evidence" value="ECO:0007669"/>
    <property type="project" value="UniProtKB-SubCell"/>
</dbReference>
<dbReference type="GO" id="GO:0005524">
    <property type="term" value="F:ATP binding"/>
    <property type="evidence" value="ECO:0007669"/>
    <property type="project" value="UniProtKB-KW"/>
</dbReference>
<dbReference type="GO" id="GO:0016887">
    <property type="term" value="F:ATP hydrolysis activity"/>
    <property type="evidence" value="ECO:0007669"/>
    <property type="project" value="InterPro"/>
</dbReference>
<dbReference type="GO" id="GO:0022857">
    <property type="term" value="F:transmembrane transporter activity"/>
    <property type="evidence" value="ECO:0007669"/>
    <property type="project" value="TreeGrafter"/>
</dbReference>
<dbReference type="GO" id="GO:0044874">
    <property type="term" value="P:lipoprotein localization to outer membrane"/>
    <property type="evidence" value="ECO:0007669"/>
    <property type="project" value="TreeGrafter"/>
</dbReference>
<dbReference type="GO" id="GO:0089705">
    <property type="term" value="P:protein localization to outer membrane"/>
    <property type="evidence" value="ECO:0007669"/>
    <property type="project" value="TreeGrafter"/>
</dbReference>
<dbReference type="CDD" id="cd03255">
    <property type="entry name" value="ABC_MJ0796_LolCDE_FtsE"/>
    <property type="match status" value="1"/>
</dbReference>
<dbReference type="FunFam" id="3.40.50.300:FF:000230">
    <property type="entry name" value="Lipoprotein-releasing system ATP-binding protein LolD"/>
    <property type="match status" value="1"/>
</dbReference>
<dbReference type="Gene3D" id="3.40.50.300">
    <property type="entry name" value="P-loop containing nucleotide triphosphate hydrolases"/>
    <property type="match status" value="1"/>
</dbReference>
<dbReference type="InterPro" id="IPR003593">
    <property type="entry name" value="AAA+_ATPase"/>
</dbReference>
<dbReference type="InterPro" id="IPR003439">
    <property type="entry name" value="ABC_transporter-like_ATP-bd"/>
</dbReference>
<dbReference type="InterPro" id="IPR017871">
    <property type="entry name" value="ABC_transporter-like_CS"/>
</dbReference>
<dbReference type="InterPro" id="IPR015854">
    <property type="entry name" value="ABC_transpr_LolD-like"/>
</dbReference>
<dbReference type="InterPro" id="IPR011924">
    <property type="entry name" value="LolD_lipo_ATP-bd"/>
</dbReference>
<dbReference type="InterPro" id="IPR017911">
    <property type="entry name" value="MacB-like_ATP-bd"/>
</dbReference>
<dbReference type="InterPro" id="IPR027417">
    <property type="entry name" value="P-loop_NTPase"/>
</dbReference>
<dbReference type="NCBIfam" id="TIGR02211">
    <property type="entry name" value="LolD_lipo_ex"/>
    <property type="match status" value="1"/>
</dbReference>
<dbReference type="PANTHER" id="PTHR24220">
    <property type="entry name" value="IMPORT ATP-BINDING PROTEIN"/>
    <property type="match status" value="1"/>
</dbReference>
<dbReference type="PANTHER" id="PTHR24220:SF689">
    <property type="entry name" value="LIPOPROTEIN-RELEASING SYSTEM ATP-BINDING PROTEIN LOLD"/>
    <property type="match status" value="1"/>
</dbReference>
<dbReference type="Pfam" id="PF00005">
    <property type="entry name" value="ABC_tran"/>
    <property type="match status" value="1"/>
</dbReference>
<dbReference type="SMART" id="SM00382">
    <property type="entry name" value="AAA"/>
    <property type="match status" value="1"/>
</dbReference>
<dbReference type="SUPFAM" id="SSF52540">
    <property type="entry name" value="P-loop containing nucleoside triphosphate hydrolases"/>
    <property type="match status" value="1"/>
</dbReference>
<dbReference type="PROSITE" id="PS00211">
    <property type="entry name" value="ABC_TRANSPORTER_1"/>
    <property type="match status" value="1"/>
</dbReference>
<dbReference type="PROSITE" id="PS50893">
    <property type="entry name" value="ABC_TRANSPORTER_2"/>
    <property type="match status" value="1"/>
</dbReference>
<dbReference type="PROSITE" id="PS51244">
    <property type="entry name" value="LOLD"/>
    <property type="match status" value="1"/>
</dbReference>
<protein>
    <recommendedName>
        <fullName evidence="1">Lipoprotein-releasing system ATP-binding protein LolD</fullName>
        <ecNumber evidence="1">7.6.2.-</ecNumber>
    </recommendedName>
</protein>